<keyword id="KW-0202">Cytokine</keyword>
<keyword id="KW-1015">Disulfide bond</keyword>
<keyword id="KW-0325">Glycoprotein</keyword>
<keyword id="KW-0339">Growth factor</keyword>
<keyword id="KW-1185">Reference proteome</keyword>
<keyword id="KW-0964">Secreted</keyword>
<keyword id="KW-0732">Signal</keyword>
<organism>
    <name type="scientific">Canis lupus familiaris</name>
    <name type="common">Dog</name>
    <name type="synonym">Canis familiaris</name>
    <dbReference type="NCBI Taxonomy" id="9615"/>
    <lineage>
        <taxon>Eukaryota</taxon>
        <taxon>Metazoa</taxon>
        <taxon>Chordata</taxon>
        <taxon>Craniata</taxon>
        <taxon>Vertebrata</taxon>
        <taxon>Euteleostomi</taxon>
        <taxon>Mammalia</taxon>
        <taxon>Eutheria</taxon>
        <taxon>Laurasiatheria</taxon>
        <taxon>Carnivora</taxon>
        <taxon>Caniformia</taxon>
        <taxon>Canidae</taxon>
        <taxon>Canis</taxon>
    </lineage>
</organism>
<name>IL5_CANLF</name>
<evidence type="ECO:0000250" key="1"/>
<evidence type="ECO:0000250" key="2">
    <source>
        <dbReference type="UniProtKB" id="P04401"/>
    </source>
</evidence>
<evidence type="ECO:0000250" key="3">
    <source>
        <dbReference type="UniProtKB" id="P05113"/>
    </source>
</evidence>
<evidence type="ECO:0000255" key="4"/>
<evidence type="ECO:0000305" key="5"/>
<accession>Q95J76</accession>
<proteinExistence type="evidence at transcript level"/>
<protein>
    <recommendedName>
        <fullName>Interleukin-5</fullName>
        <shortName>IL-5</shortName>
    </recommendedName>
    <alternativeName>
        <fullName>Eosinophil differentiation factor</fullName>
    </alternativeName>
    <alternativeName>
        <fullName>T-cell replacing factor</fullName>
        <shortName>TRF</shortName>
    </alternativeName>
</protein>
<reference key="1">
    <citation type="journal article" date="2001" name="J. Interferon Cytokine Res.">
        <title>Canine interleukin-5: molecular characterization of the gene and expression of biologically active recombinant protein.</title>
        <authorList>
            <person name="Yang S."/>
            <person name="Sellins K.S."/>
            <person name="Weber E."/>
            <person name="McCall C."/>
        </authorList>
    </citation>
    <scope>NUCLEOTIDE SEQUENCE [GENOMIC DNA / MRNA]</scope>
</reference>
<gene>
    <name type="primary">IL5</name>
</gene>
<comment type="function">
    <text evidence="2 3">Homodimeric cytokine expressed predominantly by T-lymphocytes and NK cells that plays an important role in the survival, differentiation, and chemotaxis of eosinophils. Also acts on activated and resting B-cells to induce immunoglobulin production, growth, and differentiation (By similarity). Mechanistically, exerts its biological effects through a receptor composed of IL5RA subunit and the cytokine receptor common subunit beta/CSF2RB. Binding to the receptor leads to activation of various kinases including LYN, SYK and JAK2 and thereby propagates signals through the RAS-MAPK and JAK-STAT5 pathways respectively (By similarity).</text>
</comment>
<comment type="subunit">
    <text evidence="2 3">Homodimer; disulfide-linked. Interacts with IL5RA. Interacts with CSF2RB.</text>
</comment>
<comment type="subcellular location">
    <subcellularLocation>
        <location evidence="2">Secreted</location>
    </subcellularLocation>
</comment>
<comment type="similarity">
    <text evidence="5">Belongs to the IL-5 family.</text>
</comment>
<sequence>MRMLLNLSLLALGAAYVSAFAVENPMNRLVAETLTLLSTHRTWLIGDGNLMIPTPENKNHQLCIKEVFQGIDTLKNQTAHGEAVDKLFQNLSLIKEHIERQKKRCAGERWRVTKFLDYLQVFLGVINTEWTPES</sequence>
<feature type="signal peptide" evidence="1">
    <location>
        <begin position="1"/>
        <end position="21"/>
    </location>
</feature>
<feature type="chain" id="PRO_0000015555" description="Interleukin-5">
    <location>
        <begin position="22"/>
        <end position="134"/>
    </location>
</feature>
<feature type="glycosylation site" description="N-linked (GlcNAc...) asparagine" evidence="4">
    <location>
        <position position="76"/>
    </location>
</feature>
<feature type="glycosylation site" description="N-linked (GlcNAc...) asparagine" evidence="4">
    <location>
        <position position="90"/>
    </location>
</feature>
<feature type="disulfide bond" description="Interchain (with C-105)" evidence="1">
    <location>
        <position position="63"/>
    </location>
</feature>
<feature type="disulfide bond" description="Interchain (with C-63)" evidence="1">
    <location>
        <position position="105"/>
    </location>
</feature>
<dbReference type="EMBL" id="AF331920">
    <property type="protein sequence ID" value="AAL10716.1"/>
    <property type="molecule type" value="Genomic_DNA"/>
</dbReference>
<dbReference type="EMBL" id="AF331919">
    <property type="protein sequence ID" value="AAL10715.1"/>
    <property type="molecule type" value="mRNA"/>
</dbReference>
<dbReference type="RefSeq" id="NP_001006951.1">
    <property type="nucleotide sequence ID" value="NM_001006950.1"/>
</dbReference>
<dbReference type="SMR" id="Q95J76"/>
<dbReference type="FunCoup" id="Q95J76">
    <property type="interactions" value="102"/>
</dbReference>
<dbReference type="STRING" id="9615.ENSCAFP00000001224"/>
<dbReference type="GlyCosmos" id="Q95J76">
    <property type="glycosylation" value="2 sites, No reported glycans"/>
</dbReference>
<dbReference type="PaxDb" id="9612-ENSCAFP00000001224"/>
<dbReference type="Ensembl" id="ENSCAFT00000001335.3">
    <property type="protein sequence ID" value="ENSCAFP00000001224.1"/>
    <property type="gene ID" value="ENSCAFG00000000855.5"/>
</dbReference>
<dbReference type="Ensembl" id="ENSCAFT00030022203.1">
    <property type="protein sequence ID" value="ENSCAFP00030019368.1"/>
    <property type="gene ID" value="ENSCAFG00030011982.1"/>
</dbReference>
<dbReference type="Ensembl" id="ENSCAFT00040011369.1">
    <property type="protein sequence ID" value="ENSCAFP00040009848.1"/>
    <property type="gene ID" value="ENSCAFG00040006091.1"/>
</dbReference>
<dbReference type="Ensembl" id="ENSCAFT00845018628.1">
    <property type="protein sequence ID" value="ENSCAFP00845014535.1"/>
    <property type="gene ID" value="ENSCAFG00845010566.1"/>
</dbReference>
<dbReference type="GeneID" id="403790"/>
<dbReference type="KEGG" id="cfa:403790"/>
<dbReference type="CTD" id="3567"/>
<dbReference type="VEuPathDB" id="HostDB:ENSCAFG00845010566"/>
<dbReference type="VGNC" id="VGNC:41990">
    <property type="gene designation" value="IL5"/>
</dbReference>
<dbReference type="eggNOG" id="ENOG502RWD8">
    <property type="taxonomic scope" value="Eukaryota"/>
</dbReference>
<dbReference type="GeneTree" id="ENSGT00390000016991"/>
<dbReference type="HOGENOM" id="CLU_156269_0_0_1"/>
<dbReference type="InParanoid" id="Q95J76"/>
<dbReference type="OMA" id="VPTHKNH"/>
<dbReference type="OrthoDB" id="9446172at2759"/>
<dbReference type="TreeFam" id="TF338422"/>
<dbReference type="Reactome" id="R-CFA-512988">
    <property type="pathway name" value="Interleukin-3, Interleukin-5 and GM-CSF signaling"/>
</dbReference>
<dbReference type="Reactome" id="R-CFA-5673001">
    <property type="pathway name" value="RAF/MAP kinase cascade"/>
</dbReference>
<dbReference type="Reactome" id="R-CFA-912526">
    <property type="pathway name" value="Interleukin receptor SHC signaling"/>
</dbReference>
<dbReference type="Proteomes" id="UP000002254">
    <property type="component" value="Chromosome 11"/>
</dbReference>
<dbReference type="Proteomes" id="UP000694429">
    <property type="component" value="Chromosome 11"/>
</dbReference>
<dbReference type="Proteomes" id="UP000694542">
    <property type="component" value="Chromosome 11"/>
</dbReference>
<dbReference type="Proteomes" id="UP000805418">
    <property type="component" value="Chromosome 11"/>
</dbReference>
<dbReference type="Bgee" id="ENSCAFG00000000855">
    <property type="expression patterns" value="Expressed in testis and 47 other cell types or tissues"/>
</dbReference>
<dbReference type="GO" id="GO:0005615">
    <property type="term" value="C:extracellular space"/>
    <property type="evidence" value="ECO:0000318"/>
    <property type="project" value="GO_Central"/>
</dbReference>
<dbReference type="GO" id="GO:0005125">
    <property type="term" value="F:cytokine activity"/>
    <property type="evidence" value="ECO:0000318"/>
    <property type="project" value="GO_Central"/>
</dbReference>
<dbReference type="GO" id="GO:0008083">
    <property type="term" value="F:growth factor activity"/>
    <property type="evidence" value="ECO:0007669"/>
    <property type="project" value="UniProtKB-KW"/>
</dbReference>
<dbReference type="GO" id="GO:0005137">
    <property type="term" value="F:interleukin-5 receptor binding"/>
    <property type="evidence" value="ECO:0007669"/>
    <property type="project" value="InterPro"/>
</dbReference>
<dbReference type="GO" id="GO:0006955">
    <property type="term" value="P:immune response"/>
    <property type="evidence" value="ECO:0007669"/>
    <property type="project" value="InterPro"/>
</dbReference>
<dbReference type="GO" id="GO:0038043">
    <property type="term" value="P:interleukin-5-mediated signaling pathway"/>
    <property type="evidence" value="ECO:0000318"/>
    <property type="project" value="GO_Central"/>
</dbReference>
<dbReference type="GO" id="GO:0045893">
    <property type="term" value="P:positive regulation of DNA-templated transcription"/>
    <property type="evidence" value="ECO:0007669"/>
    <property type="project" value="Ensembl"/>
</dbReference>
<dbReference type="GO" id="GO:0002639">
    <property type="term" value="P:positive regulation of immunoglobulin production"/>
    <property type="evidence" value="ECO:0007669"/>
    <property type="project" value="Ensembl"/>
</dbReference>
<dbReference type="GO" id="GO:0071803">
    <property type="term" value="P:positive regulation of podosome assembly"/>
    <property type="evidence" value="ECO:0007669"/>
    <property type="project" value="Ensembl"/>
</dbReference>
<dbReference type="Gene3D" id="1.20.1250.10">
    <property type="match status" value="1"/>
</dbReference>
<dbReference type="InterPro" id="IPR009079">
    <property type="entry name" value="4_helix_cytokine-like_core"/>
</dbReference>
<dbReference type="InterPro" id="IPR000186">
    <property type="entry name" value="IL-5"/>
</dbReference>
<dbReference type="PANTHER" id="PTHR48491">
    <property type="entry name" value="INTERLEUKIN-5"/>
    <property type="match status" value="1"/>
</dbReference>
<dbReference type="PANTHER" id="PTHR48491:SF1">
    <property type="entry name" value="INTERLEUKIN-5"/>
    <property type="match status" value="1"/>
</dbReference>
<dbReference type="Pfam" id="PF02025">
    <property type="entry name" value="IL5"/>
    <property type="match status" value="1"/>
</dbReference>
<dbReference type="PRINTS" id="PR00432">
    <property type="entry name" value="INTERLEUKIN5"/>
</dbReference>
<dbReference type="SUPFAM" id="SSF47266">
    <property type="entry name" value="4-helical cytokines"/>
    <property type="match status" value="1"/>
</dbReference>